<gene>
    <name evidence="1" type="primary">mnmA</name>
    <name type="ordered locus">Syncc9902_1521</name>
</gene>
<protein>
    <recommendedName>
        <fullName evidence="1">tRNA-specific 2-thiouridylase MnmA</fullName>
        <ecNumber evidence="1">2.8.1.13</ecNumber>
    </recommendedName>
</protein>
<sequence>MALGTTMTEAGEAALGRLRQWPGEHRVAVGLSGGVDSSLTAALLVEAGWEVEGLTLWLMSGKGACCAEGLVDAAGICEQLGIPHHVVDTRETFQKEIVQRLVDGYQDGITPLPCSQCNRSVKFGPMLEWAAQERNLPRIATGHYARIRHGGDCGRHQLLRGLDSRKDQSYFLYDLPQEALGRIVFPLGELTKADTRIEAGRHGLRTAEKPESQDLCLADHHGSMRAFLDTYLPPRQGEIVLKDGTVVGEHDGIEHFTIGQRKGLGVAWQEPLHVVKLDPAMNRVVVAPRAEAGRHEAVVGAINWVSIDPPLQAMNLEVQVRYRSAPVTARLTPLPATDDDHQRQRPHRCHLVFDEDQFSIAPGQAAVFYSDDTVLGGGLLQRDFDTNQE</sequence>
<accession>Q3AV73</accession>
<feature type="chain" id="PRO_0000349828" description="tRNA-specific 2-thiouridylase MnmA">
    <location>
        <begin position="1"/>
        <end position="389"/>
    </location>
</feature>
<feature type="region of interest" description="Interaction with tRNA" evidence="1">
    <location>
        <begin position="166"/>
        <end position="168"/>
    </location>
</feature>
<feature type="region of interest" description="Interaction with tRNA" evidence="1">
    <location>
        <begin position="321"/>
        <end position="322"/>
    </location>
</feature>
<feature type="active site" description="Nucleophile" evidence="1">
    <location>
        <position position="117"/>
    </location>
</feature>
<feature type="active site" description="Cysteine persulfide intermediate" evidence="1">
    <location>
        <position position="216"/>
    </location>
</feature>
<feature type="binding site" evidence="1">
    <location>
        <begin position="30"/>
        <end position="37"/>
    </location>
    <ligand>
        <name>ATP</name>
        <dbReference type="ChEBI" id="CHEBI:30616"/>
    </ligand>
</feature>
<feature type="binding site" evidence="1">
    <location>
        <position position="56"/>
    </location>
    <ligand>
        <name>ATP</name>
        <dbReference type="ChEBI" id="CHEBI:30616"/>
    </ligand>
</feature>
<feature type="binding site" evidence="1">
    <location>
        <position position="142"/>
    </location>
    <ligand>
        <name>ATP</name>
        <dbReference type="ChEBI" id="CHEBI:30616"/>
    </ligand>
</feature>
<feature type="site" description="Interaction with tRNA" evidence="1">
    <location>
        <position position="143"/>
    </location>
</feature>
<feature type="site" description="Interaction with tRNA" evidence="1">
    <location>
        <position position="364"/>
    </location>
</feature>
<feature type="disulfide bond" description="Alternate" evidence="1">
    <location>
        <begin position="117"/>
        <end position="216"/>
    </location>
</feature>
<reference key="1">
    <citation type="submission" date="2005-08" db="EMBL/GenBank/DDBJ databases">
        <title>Complete sequence of Synechococcus sp. CC9902.</title>
        <authorList>
            <person name="Copeland A."/>
            <person name="Lucas S."/>
            <person name="Lapidus A."/>
            <person name="Barry K."/>
            <person name="Detter J.C."/>
            <person name="Glavina T."/>
            <person name="Hammon N."/>
            <person name="Israni S."/>
            <person name="Pitluck S."/>
            <person name="Martinez M."/>
            <person name="Schmutz J."/>
            <person name="Larimer F."/>
            <person name="Land M."/>
            <person name="Kyrpides N."/>
            <person name="Ivanova N."/>
            <person name="Richardson P."/>
        </authorList>
    </citation>
    <scope>NUCLEOTIDE SEQUENCE [LARGE SCALE GENOMIC DNA]</scope>
    <source>
        <strain>CC9902</strain>
    </source>
</reference>
<keyword id="KW-0067">ATP-binding</keyword>
<keyword id="KW-0963">Cytoplasm</keyword>
<keyword id="KW-1015">Disulfide bond</keyword>
<keyword id="KW-0547">Nucleotide-binding</keyword>
<keyword id="KW-1185">Reference proteome</keyword>
<keyword id="KW-0694">RNA-binding</keyword>
<keyword id="KW-0808">Transferase</keyword>
<keyword id="KW-0819">tRNA processing</keyword>
<keyword id="KW-0820">tRNA-binding</keyword>
<organism>
    <name type="scientific">Synechococcus sp. (strain CC9902)</name>
    <dbReference type="NCBI Taxonomy" id="316279"/>
    <lineage>
        <taxon>Bacteria</taxon>
        <taxon>Bacillati</taxon>
        <taxon>Cyanobacteriota</taxon>
        <taxon>Cyanophyceae</taxon>
        <taxon>Synechococcales</taxon>
        <taxon>Synechococcaceae</taxon>
        <taxon>Synechococcus</taxon>
    </lineage>
</organism>
<evidence type="ECO:0000255" key="1">
    <source>
        <dbReference type="HAMAP-Rule" id="MF_00144"/>
    </source>
</evidence>
<proteinExistence type="inferred from homology"/>
<comment type="function">
    <text evidence="1">Catalyzes the 2-thiolation of uridine at the wobble position (U34) of tRNA, leading to the formation of s(2)U34.</text>
</comment>
<comment type="catalytic activity">
    <reaction evidence="1">
        <text>S-sulfanyl-L-cysteinyl-[protein] + uridine(34) in tRNA + AH2 + ATP = 2-thiouridine(34) in tRNA + L-cysteinyl-[protein] + A + AMP + diphosphate + H(+)</text>
        <dbReference type="Rhea" id="RHEA:47032"/>
        <dbReference type="Rhea" id="RHEA-COMP:10131"/>
        <dbReference type="Rhea" id="RHEA-COMP:11726"/>
        <dbReference type="Rhea" id="RHEA-COMP:11727"/>
        <dbReference type="Rhea" id="RHEA-COMP:11728"/>
        <dbReference type="ChEBI" id="CHEBI:13193"/>
        <dbReference type="ChEBI" id="CHEBI:15378"/>
        <dbReference type="ChEBI" id="CHEBI:17499"/>
        <dbReference type="ChEBI" id="CHEBI:29950"/>
        <dbReference type="ChEBI" id="CHEBI:30616"/>
        <dbReference type="ChEBI" id="CHEBI:33019"/>
        <dbReference type="ChEBI" id="CHEBI:61963"/>
        <dbReference type="ChEBI" id="CHEBI:65315"/>
        <dbReference type="ChEBI" id="CHEBI:87170"/>
        <dbReference type="ChEBI" id="CHEBI:456215"/>
        <dbReference type="EC" id="2.8.1.13"/>
    </reaction>
</comment>
<comment type="subcellular location">
    <subcellularLocation>
        <location evidence="1">Cytoplasm</location>
    </subcellularLocation>
</comment>
<comment type="similarity">
    <text evidence="1">Belongs to the MnmA/TRMU family.</text>
</comment>
<dbReference type="EC" id="2.8.1.13" evidence="1"/>
<dbReference type="EMBL" id="CP000097">
    <property type="protein sequence ID" value="ABB26479.1"/>
    <property type="molecule type" value="Genomic_DNA"/>
</dbReference>
<dbReference type="RefSeq" id="WP_011360297.1">
    <property type="nucleotide sequence ID" value="NC_007513.1"/>
</dbReference>
<dbReference type="SMR" id="Q3AV73"/>
<dbReference type="STRING" id="316279.Syncc9902_1521"/>
<dbReference type="KEGG" id="sye:Syncc9902_1521"/>
<dbReference type="eggNOG" id="COG0482">
    <property type="taxonomic scope" value="Bacteria"/>
</dbReference>
<dbReference type="HOGENOM" id="CLU_035188_0_0_3"/>
<dbReference type="OrthoDB" id="9800696at2"/>
<dbReference type="Proteomes" id="UP000002712">
    <property type="component" value="Chromosome"/>
</dbReference>
<dbReference type="GO" id="GO:0005737">
    <property type="term" value="C:cytoplasm"/>
    <property type="evidence" value="ECO:0007669"/>
    <property type="project" value="UniProtKB-SubCell"/>
</dbReference>
<dbReference type="GO" id="GO:0005524">
    <property type="term" value="F:ATP binding"/>
    <property type="evidence" value="ECO:0007669"/>
    <property type="project" value="UniProtKB-KW"/>
</dbReference>
<dbReference type="GO" id="GO:0000049">
    <property type="term" value="F:tRNA binding"/>
    <property type="evidence" value="ECO:0007669"/>
    <property type="project" value="UniProtKB-KW"/>
</dbReference>
<dbReference type="GO" id="GO:0103016">
    <property type="term" value="F:tRNA-uridine 2-sulfurtransferase activity"/>
    <property type="evidence" value="ECO:0007669"/>
    <property type="project" value="UniProtKB-EC"/>
</dbReference>
<dbReference type="GO" id="GO:0002143">
    <property type="term" value="P:tRNA wobble position uridine thiolation"/>
    <property type="evidence" value="ECO:0007669"/>
    <property type="project" value="TreeGrafter"/>
</dbReference>
<dbReference type="CDD" id="cd01998">
    <property type="entry name" value="MnmA_TRMU-like"/>
    <property type="match status" value="1"/>
</dbReference>
<dbReference type="FunFam" id="2.30.30.280:FF:000001">
    <property type="entry name" value="tRNA-specific 2-thiouridylase MnmA"/>
    <property type="match status" value="1"/>
</dbReference>
<dbReference type="Gene3D" id="2.30.30.280">
    <property type="entry name" value="Adenine nucleotide alpha hydrolases-like domains"/>
    <property type="match status" value="1"/>
</dbReference>
<dbReference type="Gene3D" id="3.40.50.620">
    <property type="entry name" value="HUPs"/>
    <property type="match status" value="1"/>
</dbReference>
<dbReference type="Gene3D" id="2.40.30.10">
    <property type="entry name" value="Translation factors"/>
    <property type="match status" value="1"/>
</dbReference>
<dbReference type="HAMAP" id="MF_00144">
    <property type="entry name" value="tRNA_thiouridyl_MnmA"/>
    <property type="match status" value="1"/>
</dbReference>
<dbReference type="InterPro" id="IPR004506">
    <property type="entry name" value="MnmA-like"/>
</dbReference>
<dbReference type="InterPro" id="IPR046885">
    <property type="entry name" value="MnmA-like_C"/>
</dbReference>
<dbReference type="InterPro" id="IPR046884">
    <property type="entry name" value="MnmA-like_central"/>
</dbReference>
<dbReference type="InterPro" id="IPR023382">
    <property type="entry name" value="MnmA-like_central_sf"/>
</dbReference>
<dbReference type="InterPro" id="IPR014729">
    <property type="entry name" value="Rossmann-like_a/b/a_fold"/>
</dbReference>
<dbReference type="NCBIfam" id="NF001138">
    <property type="entry name" value="PRK00143.1"/>
    <property type="match status" value="1"/>
</dbReference>
<dbReference type="NCBIfam" id="TIGR00420">
    <property type="entry name" value="trmU"/>
    <property type="match status" value="1"/>
</dbReference>
<dbReference type="PANTHER" id="PTHR11933:SF5">
    <property type="entry name" value="MITOCHONDRIAL TRNA-SPECIFIC 2-THIOURIDYLASE 1"/>
    <property type="match status" value="1"/>
</dbReference>
<dbReference type="PANTHER" id="PTHR11933">
    <property type="entry name" value="TRNA 5-METHYLAMINOMETHYL-2-THIOURIDYLATE -METHYLTRANSFERASE"/>
    <property type="match status" value="1"/>
</dbReference>
<dbReference type="Pfam" id="PF03054">
    <property type="entry name" value="tRNA_Me_trans"/>
    <property type="match status" value="1"/>
</dbReference>
<dbReference type="Pfam" id="PF20258">
    <property type="entry name" value="tRNA_Me_trans_C"/>
    <property type="match status" value="1"/>
</dbReference>
<dbReference type="Pfam" id="PF20259">
    <property type="entry name" value="tRNA_Me_trans_M"/>
    <property type="match status" value="1"/>
</dbReference>
<dbReference type="SUPFAM" id="SSF52402">
    <property type="entry name" value="Adenine nucleotide alpha hydrolases-like"/>
    <property type="match status" value="1"/>
</dbReference>
<name>MNMA_SYNS9</name>